<organism>
    <name type="scientific">Desulforamulus reducens (strain ATCC BAA-1160 / DSM 100696 / MI-1)</name>
    <name type="common">Desulfotomaculum reducens</name>
    <dbReference type="NCBI Taxonomy" id="349161"/>
    <lineage>
        <taxon>Bacteria</taxon>
        <taxon>Bacillati</taxon>
        <taxon>Bacillota</taxon>
        <taxon>Clostridia</taxon>
        <taxon>Eubacteriales</taxon>
        <taxon>Peptococcaceae</taxon>
        <taxon>Desulforamulus</taxon>
    </lineage>
</organism>
<feature type="chain" id="PRO_0000388846" description="UPF0756 membrane protein Dred_1676">
    <location>
        <begin position="1"/>
        <end position="151"/>
    </location>
</feature>
<feature type="transmembrane region" description="Helical" evidence="1">
    <location>
        <begin position="9"/>
        <end position="29"/>
    </location>
</feature>
<feature type="transmembrane region" description="Helical" evidence="1">
    <location>
        <begin position="47"/>
        <end position="67"/>
    </location>
</feature>
<feature type="transmembrane region" description="Helical" evidence="1">
    <location>
        <begin position="75"/>
        <end position="95"/>
    </location>
</feature>
<feature type="transmembrane region" description="Helical" evidence="1">
    <location>
        <begin position="111"/>
        <end position="131"/>
    </location>
</feature>
<keyword id="KW-1003">Cell membrane</keyword>
<keyword id="KW-0472">Membrane</keyword>
<keyword id="KW-1185">Reference proteome</keyword>
<keyword id="KW-0812">Transmembrane</keyword>
<keyword id="KW-1133">Transmembrane helix</keyword>
<gene>
    <name type="ordered locus">Dred_1676</name>
</gene>
<accession>A4J550</accession>
<proteinExistence type="inferred from homology"/>
<evidence type="ECO:0000255" key="1">
    <source>
        <dbReference type="HAMAP-Rule" id="MF_01874"/>
    </source>
</evidence>
<protein>
    <recommendedName>
        <fullName evidence="1">UPF0756 membrane protein Dred_1676</fullName>
    </recommendedName>
</protein>
<reference key="1">
    <citation type="submission" date="2007-03" db="EMBL/GenBank/DDBJ databases">
        <title>Complete sequence of Desulfotomaculum reducens MI-1.</title>
        <authorList>
            <consortium name="US DOE Joint Genome Institute"/>
            <person name="Copeland A."/>
            <person name="Lucas S."/>
            <person name="Lapidus A."/>
            <person name="Barry K."/>
            <person name="Detter J.C."/>
            <person name="Glavina del Rio T."/>
            <person name="Hammon N."/>
            <person name="Israni S."/>
            <person name="Dalin E."/>
            <person name="Tice H."/>
            <person name="Pitluck S."/>
            <person name="Sims D."/>
            <person name="Brettin T."/>
            <person name="Bruce D."/>
            <person name="Han C."/>
            <person name="Tapia R."/>
            <person name="Schmutz J."/>
            <person name="Larimer F."/>
            <person name="Land M."/>
            <person name="Hauser L."/>
            <person name="Kyrpides N."/>
            <person name="Kim E."/>
            <person name="Tebo B.M."/>
            <person name="Richardson P."/>
        </authorList>
    </citation>
    <scope>NUCLEOTIDE SEQUENCE [LARGE SCALE GENOMIC DNA]</scope>
    <source>
        <strain>ATCC BAA-1160 / DSM 100696 / MI-1</strain>
    </source>
</reference>
<name>Y1676_DESRM</name>
<comment type="subcellular location">
    <subcellularLocation>
        <location evidence="1">Cell membrane</location>
        <topology evidence="1">Multi-pass membrane protein</topology>
    </subcellularLocation>
</comment>
<comment type="similarity">
    <text evidence="1">Belongs to the UPF0756 family.</text>
</comment>
<sequence length="151" mass="16305">MYSGEMTMVILLLIGLVAQSNLIAICASVLLIVQFSKMDFLFPYLETHGLELGLLFLLLSILVPIATDRVTTRDLLYNVSSLPGFLSIVGGILATHLNSEGLKLMQIDPSIIFGLIVGSVIGIIFFNGQPVGPLMAAGVAALFIEVLNWFH</sequence>
<dbReference type="EMBL" id="CP000612">
    <property type="protein sequence ID" value="ABO50203.1"/>
    <property type="molecule type" value="Genomic_DNA"/>
</dbReference>
<dbReference type="RefSeq" id="WP_011878018.1">
    <property type="nucleotide sequence ID" value="NC_009253.1"/>
</dbReference>
<dbReference type="STRING" id="349161.Dred_1676"/>
<dbReference type="KEGG" id="drm:Dred_1676"/>
<dbReference type="eggNOG" id="COG2707">
    <property type="taxonomic scope" value="Bacteria"/>
</dbReference>
<dbReference type="HOGENOM" id="CLU_125889_1_0_9"/>
<dbReference type="OrthoDB" id="80306at2"/>
<dbReference type="Proteomes" id="UP000001556">
    <property type="component" value="Chromosome"/>
</dbReference>
<dbReference type="GO" id="GO:0005886">
    <property type="term" value="C:plasma membrane"/>
    <property type="evidence" value="ECO:0007669"/>
    <property type="project" value="UniProtKB-SubCell"/>
</dbReference>
<dbReference type="HAMAP" id="MF_01874">
    <property type="entry name" value="UPF0756"/>
    <property type="match status" value="1"/>
</dbReference>
<dbReference type="InterPro" id="IPR007382">
    <property type="entry name" value="UPF0756_TM"/>
</dbReference>
<dbReference type="PANTHER" id="PTHR38452">
    <property type="entry name" value="UPF0756 MEMBRANE PROTEIN YEAL"/>
    <property type="match status" value="1"/>
</dbReference>
<dbReference type="PANTHER" id="PTHR38452:SF1">
    <property type="entry name" value="UPF0756 MEMBRANE PROTEIN YEAL"/>
    <property type="match status" value="1"/>
</dbReference>
<dbReference type="Pfam" id="PF04284">
    <property type="entry name" value="DUF441"/>
    <property type="match status" value="1"/>
</dbReference>